<feature type="chain" id="PRO_1000061025" description="Asparagine--tRNA ligase">
    <location>
        <begin position="1"/>
        <end position="466"/>
    </location>
</feature>
<protein>
    <recommendedName>
        <fullName evidence="1">Asparagine--tRNA ligase</fullName>
        <ecNumber evidence="1">6.1.1.22</ecNumber>
    </recommendedName>
    <alternativeName>
        <fullName evidence="1">Asparaginyl-tRNA synthetase</fullName>
        <shortName evidence="1">AsnRS</shortName>
    </alternativeName>
</protein>
<keyword id="KW-0030">Aminoacyl-tRNA synthetase</keyword>
<keyword id="KW-0067">ATP-binding</keyword>
<keyword id="KW-0963">Cytoplasm</keyword>
<keyword id="KW-0436">Ligase</keyword>
<keyword id="KW-0547">Nucleotide-binding</keyword>
<keyword id="KW-0648">Protein biosynthesis</keyword>
<evidence type="ECO:0000255" key="1">
    <source>
        <dbReference type="HAMAP-Rule" id="MF_00534"/>
    </source>
</evidence>
<gene>
    <name evidence="1" type="primary">asnS</name>
    <name type="ordered locus">YpsIP31758_2558</name>
</gene>
<dbReference type="EC" id="6.1.1.22" evidence="1"/>
<dbReference type="EMBL" id="CP000720">
    <property type="protein sequence ID" value="ABS49879.1"/>
    <property type="molecule type" value="Genomic_DNA"/>
</dbReference>
<dbReference type="RefSeq" id="WP_002211301.1">
    <property type="nucleotide sequence ID" value="NC_009708.1"/>
</dbReference>
<dbReference type="SMR" id="A7FJU5"/>
<dbReference type="GeneID" id="96665013"/>
<dbReference type="KEGG" id="ypi:YpsIP31758_2558"/>
<dbReference type="HOGENOM" id="CLU_004553_2_0_6"/>
<dbReference type="Proteomes" id="UP000002412">
    <property type="component" value="Chromosome"/>
</dbReference>
<dbReference type="GO" id="GO:0005737">
    <property type="term" value="C:cytoplasm"/>
    <property type="evidence" value="ECO:0007669"/>
    <property type="project" value="UniProtKB-SubCell"/>
</dbReference>
<dbReference type="GO" id="GO:0004816">
    <property type="term" value="F:asparagine-tRNA ligase activity"/>
    <property type="evidence" value="ECO:0007669"/>
    <property type="project" value="UniProtKB-UniRule"/>
</dbReference>
<dbReference type="GO" id="GO:0005524">
    <property type="term" value="F:ATP binding"/>
    <property type="evidence" value="ECO:0007669"/>
    <property type="project" value="UniProtKB-UniRule"/>
</dbReference>
<dbReference type="GO" id="GO:0003676">
    <property type="term" value="F:nucleic acid binding"/>
    <property type="evidence" value="ECO:0007669"/>
    <property type="project" value="InterPro"/>
</dbReference>
<dbReference type="GO" id="GO:0006421">
    <property type="term" value="P:asparaginyl-tRNA aminoacylation"/>
    <property type="evidence" value="ECO:0007669"/>
    <property type="project" value="UniProtKB-UniRule"/>
</dbReference>
<dbReference type="CDD" id="cd00776">
    <property type="entry name" value="AsxRS_core"/>
    <property type="match status" value="1"/>
</dbReference>
<dbReference type="CDD" id="cd04318">
    <property type="entry name" value="EcAsnRS_like_N"/>
    <property type="match status" value="1"/>
</dbReference>
<dbReference type="FunFam" id="3.30.930.10:FF:000016">
    <property type="entry name" value="Asparagine--tRNA ligase"/>
    <property type="match status" value="1"/>
</dbReference>
<dbReference type="Gene3D" id="3.30.930.10">
    <property type="entry name" value="Bira Bifunctional Protein, Domain 2"/>
    <property type="match status" value="1"/>
</dbReference>
<dbReference type="Gene3D" id="2.40.50.140">
    <property type="entry name" value="Nucleic acid-binding proteins"/>
    <property type="match status" value="1"/>
</dbReference>
<dbReference type="HAMAP" id="MF_00534">
    <property type="entry name" value="Asn_tRNA_synth"/>
    <property type="match status" value="1"/>
</dbReference>
<dbReference type="InterPro" id="IPR004364">
    <property type="entry name" value="Aa-tRNA-synt_II"/>
</dbReference>
<dbReference type="InterPro" id="IPR006195">
    <property type="entry name" value="aa-tRNA-synth_II"/>
</dbReference>
<dbReference type="InterPro" id="IPR045864">
    <property type="entry name" value="aa-tRNA-synth_II/BPL/LPL"/>
</dbReference>
<dbReference type="InterPro" id="IPR004522">
    <property type="entry name" value="Asn-tRNA-ligase"/>
</dbReference>
<dbReference type="InterPro" id="IPR002312">
    <property type="entry name" value="Asp/Asn-tRNA-synth_IIb"/>
</dbReference>
<dbReference type="InterPro" id="IPR012340">
    <property type="entry name" value="NA-bd_OB-fold"/>
</dbReference>
<dbReference type="InterPro" id="IPR004365">
    <property type="entry name" value="NA-bd_OB_tRNA"/>
</dbReference>
<dbReference type="NCBIfam" id="TIGR00457">
    <property type="entry name" value="asnS"/>
    <property type="match status" value="1"/>
</dbReference>
<dbReference type="NCBIfam" id="NF003037">
    <property type="entry name" value="PRK03932.1"/>
    <property type="match status" value="1"/>
</dbReference>
<dbReference type="PANTHER" id="PTHR22594:SF34">
    <property type="entry name" value="ASPARAGINE--TRNA LIGASE, MITOCHONDRIAL-RELATED"/>
    <property type="match status" value="1"/>
</dbReference>
<dbReference type="PANTHER" id="PTHR22594">
    <property type="entry name" value="ASPARTYL/LYSYL-TRNA SYNTHETASE"/>
    <property type="match status" value="1"/>
</dbReference>
<dbReference type="Pfam" id="PF00152">
    <property type="entry name" value="tRNA-synt_2"/>
    <property type="match status" value="1"/>
</dbReference>
<dbReference type="Pfam" id="PF01336">
    <property type="entry name" value="tRNA_anti-codon"/>
    <property type="match status" value="1"/>
</dbReference>
<dbReference type="PRINTS" id="PR01042">
    <property type="entry name" value="TRNASYNTHASP"/>
</dbReference>
<dbReference type="SUPFAM" id="SSF55681">
    <property type="entry name" value="Class II aaRS and biotin synthetases"/>
    <property type="match status" value="1"/>
</dbReference>
<dbReference type="SUPFAM" id="SSF50249">
    <property type="entry name" value="Nucleic acid-binding proteins"/>
    <property type="match status" value="1"/>
</dbReference>
<dbReference type="PROSITE" id="PS50862">
    <property type="entry name" value="AA_TRNA_LIGASE_II"/>
    <property type="match status" value="1"/>
</dbReference>
<organism>
    <name type="scientific">Yersinia pseudotuberculosis serotype O:1b (strain IP 31758)</name>
    <dbReference type="NCBI Taxonomy" id="349747"/>
    <lineage>
        <taxon>Bacteria</taxon>
        <taxon>Pseudomonadati</taxon>
        <taxon>Pseudomonadota</taxon>
        <taxon>Gammaproteobacteria</taxon>
        <taxon>Enterobacterales</taxon>
        <taxon>Yersiniaceae</taxon>
        <taxon>Yersinia</taxon>
    </lineage>
</organism>
<reference key="1">
    <citation type="journal article" date="2007" name="PLoS Genet.">
        <title>The complete genome sequence of Yersinia pseudotuberculosis IP31758, the causative agent of Far East scarlet-like fever.</title>
        <authorList>
            <person name="Eppinger M."/>
            <person name="Rosovitz M.J."/>
            <person name="Fricke W.F."/>
            <person name="Rasko D.A."/>
            <person name="Kokorina G."/>
            <person name="Fayolle C."/>
            <person name="Lindler L.E."/>
            <person name="Carniel E."/>
            <person name="Ravel J."/>
        </authorList>
    </citation>
    <scope>NUCLEOTIDE SEQUENCE [LARGE SCALE GENOMIC DNA]</scope>
    <source>
        <strain>IP 31758</strain>
    </source>
</reference>
<accession>A7FJU5</accession>
<comment type="catalytic activity">
    <reaction evidence="1">
        <text>tRNA(Asn) + L-asparagine + ATP = L-asparaginyl-tRNA(Asn) + AMP + diphosphate + H(+)</text>
        <dbReference type="Rhea" id="RHEA:11180"/>
        <dbReference type="Rhea" id="RHEA-COMP:9659"/>
        <dbReference type="Rhea" id="RHEA-COMP:9674"/>
        <dbReference type="ChEBI" id="CHEBI:15378"/>
        <dbReference type="ChEBI" id="CHEBI:30616"/>
        <dbReference type="ChEBI" id="CHEBI:33019"/>
        <dbReference type="ChEBI" id="CHEBI:58048"/>
        <dbReference type="ChEBI" id="CHEBI:78442"/>
        <dbReference type="ChEBI" id="CHEBI:78515"/>
        <dbReference type="ChEBI" id="CHEBI:456215"/>
        <dbReference type="EC" id="6.1.1.22"/>
    </reaction>
</comment>
<comment type="subunit">
    <text evidence="1">Homodimer.</text>
</comment>
<comment type="subcellular location">
    <subcellularLocation>
        <location>Cytoplasm</location>
    </subcellularLocation>
</comment>
<comment type="similarity">
    <text evidence="1">Belongs to the class-II aminoacyl-tRNA synthetase family.</text>
</comment>
<sequence length="466" mass="52074">MSVVPVVDVLQGRAAVGSEVTVRGWVRTRRDSKAGISFVAVYDGSCFDPLQAVVNNTLPNYQDEVLHLTTGCSVEVTGTVVASPGEGQSFEIQATAINVVGWVDDPDTYPMAAKRHSIEYLREVAHLRPRTNLIGAVARVRHTLAQAIHRFFDENGYFWVSTPLITASDTEGAGEMFRVSTLDLENLPRTDTGAVDFSEDFFGKEAFLTVSGQLNGETYACALSKVYTFGPTFRAENSNTSRHLAEFWMVEPEVAFASLDDVAGLAEKMLKYVFQAVLNERADDMKFFAERVDKDAVDRLQRFVTSDFAQVDYTDAIEILLASGQKFENDVSWGIDLSSEHERYLAEKHFKAPVVVKNYPKDIKAFYMRMNEDGKTVAAMDVLAPGIGEIIGGSQREERLDVLDARLAEMGLNKEDYWWYRDLRRYGTVPHSGFGLGFERLISYVTGVQNVRDVIPFPRTPRNASF</sequence>
<proteinExistence type="inferred from homology"/>
<name>SYN_YERP3</name>